<dbReference type="EMBL" id="AJ002021">
    <property type="protein sequence ID" value="CAA05146.1"/>
    <property type="molecule type" value="Genomic_DNA"/>
</dbReference>
<dbReference type="EMBL" id="CR382122">
    <property type="protein sequence ID" value="CAH02341.1"/>
    <property type="molecule type" value="Genomic_DNA"/>
</dbReference>
<dbReference type="RefSeq" id="XP_451949.1">
    <property type="nucleotide sequence ID" value="XM_451949.1"/>
</dbReference>
<dbReference type="PDB" id="4DS7">
    <property type="method" value="X-ray"/>
    <property type="resolution" value="2.15 A"/>
    <property type="chains" value="A/B/C/D=1-147"/>
</dbReference>
<dbReference type="PDBsum" id="4DS7"/>
<dbReference type="SMR" id="O60041"/>
<dbReference type="FunCoup" id="O60041">
    <property type="interactions" value="833"/>
</dbReference>
<dbReference type="STRING" id="284590.O60041"/>
<dbReference type="PaxDb" id="284590-O60041"/>
<dbReference type="KEGG" id="kla:KLLA0_B09427g"/>
<dbReference type="eggNOG" id="KOG0027">
    <property type="taxonomic scope" value="Eukaryota"/>
</dbReference>
<dbReference type="HOGENOM" id="CLU_061288_2_0_1"/>
<dbReference type="InParanoid" id="O60041"/>
<dbReference type="OMA" id="ARKMKEC"/>
<dbReference type="EvolutionaryTrace" id="O60041"/>
<dbReference type="Proteomes" id="UP000000598">
    <property type="component" value="Chromosome B"/>
</dbReference>
<dbReference type="GO" id="GO:0016460">
    <property type="term" value="C:myosin II complex"/>
    <property type="evidence" value="ECO:0007669"/>
    <property type="project" value="TreeGrafter"/>
</dbReference>
<dbReference type="GO" id="GO:0005509">
    <property type="term" value="F:calcium ion binding"/>
    <property type="evidence" value="ECO:0007669"/>
    <property type="project" value="InterPro"/>
</dbReference>
<dbReference type="CDD" id="cd00051">
    <property type="entry name" value="EFh"/>
    <property type="match status" value="2"/>
</dbReference>
<dbReference type="FunFam" id="1.10.238.10:FF:000224">
    <property type="entry name" value="CMD1p Calmodulin"/>
    <property type="match status" value="1"/>
</dbReference>
<dbReference type="Gene3D" id="1.10.238.10">
    <property type="entry name" value="EF-hand"/>
    <property type="match status" value="1"/>
</dbReference>
<dbReference type="InterPro" id="IPR050230">
    <property type="entry name" value="CALM/Myosin/TropC-like"/>
</dbReference>
<dbReference type="InterPro" id="IPR011992">
    <property type="entry name" value="EF-hand-dom_pair"/>
</dbReference>
<dbReference type="InterPro" id="IPR018247">
    <property type="entry name" value="EF_Hand_1_Ca_BS"/>
</dbReference>
<dbReference type="InterPro" id="IPR002048">
    <property type="entry name" value="EF_hand_dom"/>
</dbReference>
<dbReference type="PANTHER" id="PTHR23048:SF0">
    <property type="entry name" value="CALMODULIN LIKE 3"/>
    <property type="match status" value="1"/>
</dbReference>
<dbReference type="PANTHER" id="PTHR23048">
    <property type="entry name" value="MYOSIN LIGHT CHAIN 1, 3"/>
    <property type="match status" value="1"/>
</dbReference>
<dbReference type="Pfam" id="PF13499">
    <property type="entry name" value="EF-hand_7"/>
    <property type="match status" value="2"/>
</dbReference>
<dbReference type="SMART" id="SM00054">
    <property type="entry name" value="EFh"/>
    <property type="match status" value="3"/>
</dbReference>
<dbReference type="SUPFAM" id="SSF47473">
    <property type="entry name" value="EF-hand"/>
    <property type="match status" value="1"/>
</dbReference>
<dbReference type="PROSITE" id="PS00018">
    <property type="entry name" value="EF_HAND_1"/>
    <property type="match status" value="3"/>
</dbReference>
<dbReference type="PROSITE" id="PS50222">
    <property type="entry name" value="EF_HAND_2"/>
    <property type="match status" value="3"/>
</dbReference>
<evidence type="ECO:0000255" key="1">
    <source>
        <dbReference type="PROSITE-ProRule" id="PRU00448"/>
    </source>
</evidence>
<evidence type="ECO:0000305" key="2"/>
<evidence type="ECO:0007829" key="3">
    <source>
        <dbReference type="PDB" id="4DS7"/>
    </source>
</evidence>
<feature type="chain" id="PRO_0000198319" description="Calmodulin">
    <location>
        <begin position="1"/>
        <end position="147"/>
    </location>
</feature>
<feature type="domain" description="EF-hand 1" evidence="1">
    <location>
        <begin position="8"/>
        <end position="43"/>
    </location>
</feature>
<feature type="domain" description="EF-hand 2" evidence="1">
    <location>
        <begin position="44"/>
        <end position="79"/>
    </location>
</feature>
<feature type="domain" description="EF-hand 3" evidence="1">
    <location>
        <begin position="81"/>
        <end position="116"/>
    </location>
</feature>
<feature type="domain" description="EF-hand 4" evidence="2">
    <location>
        <begin position="120"/>
        <end position="147"/>
    </location>
</feature>
<feature type="binding site" evidence="1">
    <location>
        <position position="21"/>
    </location>
    <ligand>
        <name>Ca(2+)</name>
        <dbReference type="ChEBI" id="CHEBI:29108"/>
        <label>1</label>
    </ligand>
</feature>
<feature type="binding site" evidence="1">
    <location>
        <position position="23"/>
    </location>
    <ligand>
        <name>Ca(2+)</name>
        <dbReference type="ChEBI" id="CHEBI:29108"/>
        <label>1</label>
    </ligand>
</feature>
<feature type="binding site" evidence="1">
    <location>
        <position position="25"/>
    </location>
    <ligand>
        <name>Ca(2+)</name>
        <dbReference type="ChEBI" id="CHEBI:29108"/>
        <label>1</label>
    </ligand>
</feature>
<feature type="binding site" evidence="1">
    <location>
        <position position="27"/>
    </location>
    <ligand>
        <name>Ca(2+)</name>
        <dbReference type="ChEBI" id="CHEBI:29108"/>
        <label>1</label>
    </ligand>
</feature>
<feature type="binding site" evidence="1">
    <location>
        <position position="32"/>
    </location>
    <ligand>
        <name>Ca(2+)</name>
        <dbReference type="ChEBI" id="CHEBI:29108"/>
        <label>1</label>
    </ligand>
</feature>
<feature type="binding site" evidence="1">
    <location>
        <position position="57"/>
    </location>
    <ligand>
        <name>Ca(2+)</name>
        <dbReference type="ChEBI" id="CHEBI:29108"/>
        <label>2</label>
    </ligand>
</feature>
<feature type="binding site" evidence="1">
    <location>
        <position position="59"/>
    </location>
    <ligand>
        <name>Ca(2+)</name>
        <dbReference type="ChEBI" id="CHEBI:29108"/>
        <label>2</label>
    </ligand>
</feature>
<feature type="binding site" evidence="1">
    <location>
        <position position="61"/>
    </location>
    <ligand>
        <name>Ca(2+)</name>
        <dbReference type="ChEBI" id="CHEBI:29108"/>
        <label>2</label>
    </ligand>
</feature>
<feature type="binding site" evidence="1">
    <location>
        <position position="68"/>
    </location>
    <ligand>
        <name>Ca(2+)</name>
        <dbReference type="ChEBI" id="CHEBI:29108"/>
        <label>2</label>
    </ligand>
</feature>
<feature type="binding site" evidence="1">
    <location>
        <position position="94"/>
    </location>
    <ligand>
        <name>Ca(2+)</name>
        <dbReference type="ChEBI" id="CHEBI:29108"/>
        <label>3</label>
    </ligand>
</feature>
<feature type="binding site" evidence="1">
    <location>
        <position position="96"/>
    </location>
    <ligand>
        <name>Ca(2+)</name>
        <dbReference type="ChEBI" id="CHEBI:29108"/>
        <label>3</label>
    </ligand>
</feature>
<feature type="binding site" evidence="1">
    <location>
        <position position="98"/>
    </location>
    <ligand>
        <name>Ca(2+)</name>
        <dbReference type="ChEBI" id="CHEBI:29108"/>
        <label>3</label>
    </ligand>
</feature>
<feature type="binding site" evidence="1">
    <location>
        <position position="105"/>
    </location>
    <ligand>
        <name>Ca(2+)</name>
        <dbReference type="ChEBI" id="CHEBI:29108"/>
        <label>3</label>
    </ligand>
</feature>
<feature type="helix" evidence="3">
    <location>
        <begin position="7"/>
        <end position="20"/>
    </location>
</feature>
<feature type="strand" evidence="3">
    <location>
        <begin position="25"/>
        <end position="29"/>
    </location>
</feature>
<feature type="helix" evidence="3">
    <location>
        <begin position="30"/>
        <end position="39"/>
    </location>
</feature>
<feature type="helix" evidence="3">
    <location>
        <begin position="46"/>
        <end position="56"/>
    </location>
</feature>
<feature type="strand" evidence="3">
    <location>
        <begin position="60"/>
        <end position="65"/>
    </location>
</feature>
<feature type="helix" evidence="3">
    <location>
        <begin position="66"/>
        <end position="78"/>
    </location>
</feature>
<feature type="helix" evidence="3">
    <location>
        <begin position="80"/>
        <end position="93"/>
    </location>
</feature>
<feature type="strand" evidence="3">
    <location>
        <begin position="98"/>
        <end position="101"/>
    </location>
</feature>
<feature type="helix" evidence="3">
    <location>
        <begin position="103"/>
        <end position="112"/>
    </location>
</feature>
<feature type="helix" evidence="3">
    <location>
        <begin position="119"/>
        <end position="129"/>
    </location>
</feature>
<feature type="strand" evidence="3">
    <location>
        <begin position="130"/>
        <end position="132"/>
    </location>
</feature>
<feature type="strand" evidence="3">
    <location>
        <begin position="134"/>
        <end position="137"/>
    </location>
</feature>
<feature type="helix" evidence="3">
    <location>
        <begin position="138"/>
        <end position="144"/>
    </location>
</feature>
<gene>
    <name type="primary">CMD1</name>
    <name type="ordered locus">KLLA0B09427g</name>
</gene>
<reference key="1">
    <citation type="journal article" date="1998" name="Yeast">
        <title>Identification and characterization of the KlCMD1 gene encoding Kluyveromyces lactis calmodulin.</title>
        <authorList>
            <person name="Rayner T.F."/>
            <person name="Stark M.J.R."/>
        </authorList>
    </citation>
    <scope>NUCLEOTIDE SEQUENCE [GENOMIC DNA]</scope>
</reference>
<reference key="2">
    <citation type="journal article" date="2004" name="Nature">
        <title>Genome evolution in yeasts.</title>
        <authorList>
            <person name="Dujon B."/>
            <person name="Sherman D."/>
            <person name="Fischer G."/>
            <person name="Durrens P."/>
            <person name="Casaregola S."/>
            <person name="Lafontaine I."/>
            <person name="de Montigny J."/>
            <person name="Marck C."/>
            <person name="Neuveglise C."/>
            <person name="Talla E."/>
            <person name="Goffard N."/>
            <person name="Frangeul L."/>
            <person name="Aigle M."/>
            <person name="Anthouard V."/>
            <person name="Babour A."/>
            <person name="Barbe V."/>
            <person name="Barnay S."/>
            <person name="Blanchin S."/>
            <person name="Beckerich J.-M."/>
            <person name="Beyne E."/>
            <person name="Bleykasten C."/>
            <person name="Boisrame A."/>
            <person name="Boyer J."/>
            <person name="Cattolico L."/>
            <person name="Confanioleri F."/>
            <person name="de Daruvar A."/>
            <person name="Despons L."/>
            <person name="Fabre E."/>
            <person name="Fairhead C."/>
            <person name="Ferry-Dumazet H."/>
            <person name="Groppi A."/>
            <person name="Hantraye F."/>
            <person name="Hennequin C."/>
            <person name="Jauniaux N."/>
            <person name="Joyet P."/>
            <person name="Kachouri R."/>
            <person name="Kerrest A."/>
            <person name="Koszul R."/>
            <person name="Lemaire M."/>
            <person name="Lesur I."/>
            <person name="Ma L."/>
            <person name="Muller H."/>
            <person name="Nicaud J.-M."/>
            <person name="Nikolski M."/>
            <person name="Oztas S."/>
            <person name="Ozier-Kalogeropoulos O."/>
            <person name="Pellenz S."/>
            <person name="Potier S."/>
            <person name="Richard G.-F."/>
            <person name="Straub M.-L."/>
            <person name="Suleau A."/>
            <person name="Swennen D."/>
            <person name="Tekaia F."/>
            <person name="Wesolowski-Louvel M."/>
            <person name="Westhof E."/>
            <person name="Wirth B."/>
            <person name="Zeniou-Meyer M."/>
            <person name="Zivanovic Y."/>
            <person name="Bolotin-Fukuhara M."/>
            <person name="Thierry A."/>
            <person name="Bouchier C."/>
            <person name="Caudron B."/>
            <person name="Scarpelli C."/>
            <person name="Gaillardin C."/>
            <person name="Weissenbach J."/>
            <person name="Wincker P."/>
            <person name="Souciet J.-L."/>
        </authorList>
    </citation>
    <scope>NUCLEOTIDE SEQUENCE [LARGE SCALE GENOMIC DNA]</scope>
    <source>
        <strain>ATCC 8585 / CBS 2359 / DSM 70799 / NBRC 1267 / NRRL Y-1140 / WM37</strain>
    </source>
</reference>
<proteinExistence type="evidence at protein level"/>
<comment type="function">
    <text>Calmodulin mediates the control of a large number of enzymes, ion channels and other proteins by Ca(2+). Among the enzymes to be stimulated by the calmodulin-Ca(2+) complex are a number of protein kinases and phosphatases.</text>
</comment>
<comment type="miscellaneous">
    <text>This protein has three functional calcium-binding sites.</text>
</comment>
<comment type="similarity">
    <text evidence="2">Belongs to the calmodulin family.</text>
</comment>
<name>CALM_KLULA</name>
<keyword id="KW-0002">3D-structure</keyword>
<keyword id="KW-0106">Calcium</keyword>
<keyword id="KW-0479">Metal-binding</keyword>
<keyword id="KW-1185">Reference proteome</keyword>
<keyword id="KW-0677">Repeat</keyword>
<organism>
    <name type="scientific">Kluyveromyces lactis (strain ATCC 8585 / CBS 2359 / DSM 70799 / NBRC 1267 / NRRL Y-1140 / WM37)</name>
    <name type="common">Yeast</name>
    <name type="synonym">Candida sphaerica</name>
    <dbReference type="NCBI Taxonomy" id="284590"/>
    <lineage>
        <taxon>Eukaryota</taxon>
        <taxon>Fungi</taxon>
        <taxon>Dikarya</taxon>
        <taxon>Ascomycota</taxon>
        <taxon>Saccharomycotina</taxon>
        <taxon>Saccharomycetes</taxon>
        <taxon>Saccharomycetales</taxon>
        <taxon>Saccharomycetaceae</taxon>
        <taxon>Kluyveromyces</taxon>
    </lineage>
</organism>
<protein>
    <recommendedName>
        <fullName>Calmodulin</fullName>
        <shortName>CaM</shortName>
    </recommendedName>
</protein>
<accession>O60041</accession>
<sequence length="147" mass="16063">MSQNLTEEQIAEFKEAFALFDKDNSGSISASELATVMRSLGLSPSEAEVADLMNEIDVDGNHAIEFSEFLALMSRQLKCNDSEQELLEAFKVFDKNGDGLISAAELKHVLTSIGEKLTDAEVDEMLREVSDGSGEINIKQFAALLSK</sequence>